<proteinExistence type="inferred from homology"/>
<organism>
    <name type="scientific">Borreliella burgdorferi (strain ATCC 35210 / DSM 4680 / CIP 102532 / B31)</name>
    <name type="common">Borrelia burgdorferi</name>
    <dbReference type="NCBI Taxonomy" id="224326"/>
    <lineage>
        <taxon>Bacteria</taxon>
        <taxon>Pseudomonadati</taxon>
        <taxon>Spirochaetota</taxon>
        <taxon>Spirochaetia</taxon>
        <taxon>Spirochaetales</taxon>
        <taxon>Borreliaceae</taxon>
        <taxon>Borreliella</taxon>
    </lineage>
</organism>
<comment type="catalytic activity">
    <reaction evidence="1">
        <text>tRNA(Leu) + L-leucine + ATP = L-leucyl-tRNA(Leu) + AMP + diphosphate</text>
        <dbReference type="Rhea" id="RHEA:11688"/>
        <dbReference type="Rhea" id="RHEA-COMP:9613"/>
        <dbReference type="Rhea" id="RHEA-COMP:9622"/>
        <dbReference type="ChEBI" id="CHEBI:30616"/>
        <dbReference type="ChEBI" id="CHEBI:33019"/>
        <dbReference type="ChEBI" id="CHEBI:57427"/>
        <dbReference type="ChEBI" id="CHEBI:78442"/>
        <dbReference type="ChEBI" id="CHEBI:78494"/>
        <dbReference type="ChEBI" id="CHEBI:456215"/>
        <dbReference type="EC" id="6.1.1.4"/>
    </reaction>
</comment>
<comment type="subcellular location">
    <subcellularLocation>
        <location evidence="1">Cytoplasm</location>
    </subcellularLocation>
</comment>
<comment type="similarity">
    <text evidence="1">Belongs to the class-I aminoacyl-tRNA synthetase family.</text>
</comment>
<keyword id="KW-0030">Aminoacyl-tRNA synthetase</keyword>
<keyword id="KW-0067">ATP-binding</keyword>
<keyword id="KW-0963">Cytoplasm</keyword>
<keyword id="KW-0436">Ligase</keyword>
<keyword id="KW-0547">Nucleotide-binding</keyword>
<keyword id="KW-0648">Protein biosynthesis</keyword>
<keyword id="KW-1185">Reference proteome</keyword>
<name>SYL_BORBU</name>
<reference key="1">
    <citation type="journal article" date="1997" name="Nature">
        <title>Genomic sequence of a Lyme disease spirochaete, Borrelia burgdorferi.</title>
        <authorList>
            <person name="Fraser C.M."/>
            <person name="Casjens S."/>
            <person name="Huang W.M."/>
            <person name="Sutton G.G."/>
            <person name="Clayton R.A."/>
            <person name="Lathigra R."/>
            <person name="White O."/>
            <person name="Ketchum K.A."/>
            <person name="Dodson R.J."/>
            <person name="Hickey E.K."/>
            <person name="Gwinn M.L."/>
            <person name="Dougherty B.A."/>
            <person name="Tomb J.-F."/>
            <person name="Fleischmann R.D."/>
            <person name="Richardson D.L."/>
            <person name="Peterson J.D."/>
            <person name="Kerlavage A.R."/>
            <person name="Quackenbush J."/>
            <person name="Salzberg S.L."/>
            <person name="Hanson M."/>
            <person name="van Vugt R."/>
            <person name="Palmer N."/>
            <person name="Adams M.D."/>
            <person name="Gocayne J.D."/>
            <person name="Weidman J.F."/>
            <person name="Utterback T.R."/>
            <person name="Watthey L."/>
            <person name="McDonald L.A."/>
            <person name="Artiach P."/>
            <person name="Bowman C."/>
            <person name="Garland S.A."/>
            <person name="Fujii C."/>
            <person name="Cotton M.D."/>
            <person name="Horst K."/>
            <person name="Roberts K.M."/>
            <person name="Hatch B."/>
            <person name="Smith H.O."/>
            <person name="Venter J.C."/>
        </authorList>
    </citation>
    <scope>NUCLEOTIDE SEQUENCE [LARGE SCALE GENOMIC DNA]</scope>
    <source>
        <strain>ATCC 35210 / DSM 4680 / CIP 102532 / B31</strain>
    </source>
</reference>
<sequence>MSKYEFIKIEKKWQEFWDNNKTYKVEEDPSIPKEKRLYILDMFPYPSANGLHVGHPEGYTATDIFGRYKLLNGFHVLHPIGFDSFGLPAENYAIQTGTHPQKSTEENINKFKKQIKALGFAYDWDREIRTHEENYYKWTQWIFLQLYKKGLAYVKEMPVWYCPELGTVLANEEIIQTSDGPKSERGSYSVEKKYLRQWVLKITKYAERLLDDLEELEWPESVKEMQRNWIGKSTGVEIEFEIEGHSDKIKVFTTRPDTIFGITYLVIAPENKLIEKITKNNFKQNVLKYVKHEELKSDLNRTSLEKDKSGVFTGSYAFHPITNEKIPIWVGSYVLGTYGTGAVMGVPAHDERDFQFAKKYQLKILPVISKSGKNEILEKAFVDDGISINSPNEFNNLKNSEVKDKVIKWLTKNKKGKEKVAYKLRDWIFSRQRYWGEPIPILFDKLGNAIPLEENDLPLKLPEIANYKPSGTGESPLSRIKDWVNVKDMGFTRETNTMPQWAGSCWYYLRYLDPKNSKEFANKKKIEYWMPVDLYIGGAEHTVLHLLYSRFWHKVLYDLGYVNTKEPFKKLINQGIITSFSYQKENGVLIPNDQVIEKDNKFFDKKDNKEVTQVIAKMSKSLKNVINPDDIIKEFGADSMRIYEMFMGPLTDSKPWNTKGIIGVFRFLNKIWNLREKELSKENPPREIISELHKVIKKVTEDTEKLNFNTAISAMMIFINELLKYEKNYLNIFKPFIIILSPYAPHLAEELWEYIGELPSLFKNSKWPKFDESLIIKGKKEIVLQINGKIKDKILLNKETGEKELKEIAMENSKIKSNLLNKKIVKIIVIKNKLVNIVIK</sequence>
<dbReference type="EC" id="6.1.1.4" evidence="1"/>
<dbReference type="EMBL" id="AE000783">
    <property type="protein sequence ID" value="AAB91495.1"/>
    <property type="molecule type" value="Genomic_DNA"/>
</dbReference>
<dbReference type="PIR" id="C70131">
    <property type="entry name" value="C70131"/>
</dbReference>
<dbReference type="RefSeq" id="NP_212385.1">
    <property type="nucleotide sequence ID" value="NC_001318.1"/>
</dbReference>
<dbReference type="RefSeq" id="WP_010889717.1">
    <property type="nucleotide sequence ID" value="NC_001318.1"/>
</dbReference>
<dbReference type="SMR" id="O51267"/>
<dbReference type="STRING" id="224326.BB_0251"/>
<dbReference type="PaxDb" id="224326-BB_0251"/>
<dbReference type="EnsemblBacteria" id="AAB91495">
    <property type="protein sequence ID" value="AAB91495"/>
    <property type="gene ID" value="BB_0251"/>
</dbReference>
<dbReference type="KEGG" id="bbu:BB_0251"/>
<dbReference type="PATRIC" id="fig|224326.49.peg.650"/>
<dbReference type="HOGENOM" id="CLU_004427_0_0_12"/>
<dbReference type="OrthoDB" id="9810365at2"/>
<dbReference type="Proteomes" id="UP000001807">
    <property type="component" value="Chromosome"/>
</dbReference>
<dbReference type="GO" id="GO:0005829">
    <property type="term" value="C:cytosol"/>
    <property type="evidence" value="ECO:0007669"/>
    <property type="project" value="TreeGrafter"/>
</dbReference>
<dbReference type="GO" id="GO:0002161">
    <property type="term" value="F:aminoacyl-tRNA deacylase activity"/>
    <property type="evidence" value="ECO:0007669"/>
    <property type="project" value="InterPro"/>
</dbReference>
<dbReference type="GO" id="GO:0005524">
    <property type="term" value="F:ATP binding"/>
    <property type="evidence" value="ECO:0007669"/>
    <property type="project" value="UniProtKB-UniRule"/>
</dbReference>
<dbReference type="GO" id="GO:0004823">
    <property type="term" value="F:leucine-tRNA ligase activity"/>
    <property type="evidence" value="ECO:0007669"/>
    <property type="project" value="UniProtKB-UniRule"/>
</dbReference>
<dbReference type="GO" id="GO:0006429">
    <property type="term" value="P:leucyl-tRNA aminoacylation"/>
    <property type="evidence" value="ECO:0007669"/>
    <property type="project" value="UniProtKB-UniRule"/>
</dbReference>
<dbReference type="CDD" id="cd07958">
    <property type="entry name" value="Anticodon_Ia_Leu_BEm"/>
    <property type="match status" value="1"/>
</dbReference>
<dbReference type="CDD" id="cd00812">
    <property type="entry name" value="LeuRS_core"/>
    <property type="match status" value="1"/>
</dbReference>
<dbReference type="FunFam" id="1.10.730.10:FF:000002">
    <property type="entry name" value="Leucine--tRNA ligase"/>
    <property type="match status" value="1"/>
</dbReference>
<dbReference type="FunFam" id="3.40.50.620:FF:000056">
    <property type="entry name" value="Leucine--tRNA ligase"/>
    <property type="match status" value="1"/>
</dbReference>
<dbReference type="FunFam" id="3.40.50.620:FF:000077">
    <property type="entry name" value="Leucine--tRNA ligase"/>
    <property type="match status" value="1"/>
</dbReference>
<dbReference type="Gene3D" id="3.40.50.620">
    <property type="entry name" value="HUPs"/>
    <property type="match status" value="2"/>
</dbReference>
<dbReference type="Gene3D" id="1.10.730.10">
    <property type="entry name" value="Isoleucyl-tRNA Synthetase, Domain 1"/>
    <property type="match status" value="2"/>
</dbReference>
<dbReference type="HAMAP" id="MF_00049_B">
    <property type="entry name" value="Leu_tRNA_synth_B"/>
    <property type="match status" value="1"/>
</dbReference>
<dbReference type="InterPro" id="IPR001412">
    <property type="entry name" value="aa-tRNA-synth_I_CS"/>
</dbReference>
<dbReference type="InterPro" id="IPR002300">
    <property type="entry name" value="aa-tRNA-synth_Ia"/>
</dbReference>
<dbReference type="InterPro" id="IPR002302">
    <property type="entry name" value="Leu-tRNA-ligase"/>
</dbReference>
<dbReference type="InterPro" id="IPR025709">
    <property type="entry name" value="Leu_tRNA-synth_edit"/>
</dbReference>
<dbReference type="InterPro" id="IPR013155">
    <property type="entry name" value="M/V/L/I-tRNA-synth_anticd-bd"/>
</dbReference>
<dbReference type="InterPro" id="IPR015413">
    <property type="entry name" value="Methionyl/Leucyl_tRNA_Synth"/>
</dbReference>
<dbReference type="InterPro" id="IPR014729">
    <property type="entry name" value="Rossmann-like_a/b/a_fold"/>
</dbReference>
<dbReference type="InterPro" id="IPR009080">
    <property type="entry name" value="tRNAsynth_Ia_anticodon-bd"/>
</dbReference>
<dbReference type="InterPro" id="IPR009008">
    <property type="entry name" value="Val/Leu/Ile-tRNA-synth_edit"/>
</dbReference>
<dbReference type="NCBIfam" id="TIGR00396">
    <property type="entry name" value="leuS_bact"/>
    <property type="match status" value="1"/>
</dbReference>
<dbReference type="PANTHER" id="PTHR43740:SF2">
    <property type="entry name" value="LEUCINE--TRNA LIGASE, MITOCHONDRIAL"/>
    <property type="match status" value="1"/>
</dbReference>
<dbReference type="PANTHER" id="PTHR43740">
    <property type="entry name" value="LEUCYL-TRNA SYNTHETASE"/>
    <property type="match status" value="1"/>
</dbReference>
<dbReference type="Pfam" id="PF08264">
    <property type="entry name" value="Anticodon_1"/>
    <property type="match status" value="1"/>
</dbReference>
<dbReference type="Pfam" id="PF00133">
    <property type="entry name" value="tRNA-synt_1"/>
    <property type="match status" value="1"/>
</dbReference>
<dbReference type="Pfam" id="PF13603">
    <property type="entry name" value="tRNA-synt_1_2"/>
    <property type="match status" value="1"/>
</dbReference>
<dbReference type="Pfam" id="PF09334">
    <property type="entry name" value="tRNA-synt_1g"/>
    <property type="match status" value="1"/>
</dbReference>
<dbReference type="PRINTS" id="PR00985">
    <property type="entry name" value="TRNASYNTHLEU"/>
</dbReference>
<dbReference type="SUPFAM" id="SSF47323">
    <property type="entry name" value="Anticodon-binding domain of a subclass of class I aminoacyl-tRNA synthetases"/>
    <property type="match status" value="1"/>
</dbReference>
<dbReference type="SUPFAM" id="SSF52374">
    <property type="entry name" value="Nucleotidylyl transferase"/>
    <property type="match status" value="1"/>
</dbReference>
<dbReference type="SUPFAM" id="SSF50677">
    <property type="entry name" value="ValRS/IleRS/LeuRS editing domain"/>
    <property type="match status" value="1"/>
</dbReference>
<dbReference type="PROSITE" id="PS00178">
    <property type="entry name" value="AA_TRNA_LIGASE_I"/>
    <property type="match status" value="1"/>
</dbReference>
<evidence type="ECO:0000255" key="1">
    <source>
        <dbReference type="HAMAP-Rule" id="MF_00049"/>
    </source>
</evidence>
<gene>
    <name evidence="1" type="primary">leuS</name>
    <name type="ordered locus">BB_0251</name>
</gene>
<protein>
    <recommendedName>
        <fullName evidence="1">Leucine--tRNA ligase</fullName>
        <ecNumber evidence="1">6.1.1.4</ecNumber>
    </recommendedName>
    <alternativeName>
        <fullName evidence="1">Leucyl-tRNA synthetase</fullName>
        <shortName evidence="1">LeuRS</shortName>
    </alternativeName>
</protein>
<feature type="chain" id="PRO_0000151983" description="Leucine--tRNA ligase">
    <location>
        <begin position="1"/>
        <end position="840"/>
    </location>
</feature>
<feature type="short sequence motif" description="'HIGH' region">
    <location>
        <begin position="44"/>
        <end position="55"/>
    </location>
</feature>
<feature type="short sequence motif" description="'KMSKS' region">
    <location>
        <begin position="617"/>
        <end position="621"/>
    </location>
</feature>
<feature type="binding site" evidence="1">
    <location>
        <position position="620"/>
    </location>
    <ligand>
        <name>ATP</name>
        <dbReference type="ChEBI" id="CHEBI:30616"/>
    </ligand>
</feature>
<accession>O51267</accession>